<dbReference type="EC" id="4.2.2.n2" evidence="1"/>
<dbReference type="EMBL" id="AE014075">
    <property type="protein sequence ID" value="AAN80108.1"/>
    <property type="status" value="ALT_INIT"/>
    <property type="molecule type" value="Genomic_DNA"/>
</dbReference>
<dbReference type="EMBL" id="AF081283">
    <property type="protein sequence ID" value="AAC61708.1"/>
    <property type="molecule type" value="Genomic_DNA"/>
</dbReference>
<dbReference type="RefSeq" id="WP_001295994.1">
    <property type="nucleotide sequence ID" value="NZ_CP051263.1"/>
</dbReference>
<dbReference type="SMR" id="P59243"/>
<dbReference type="STRING" id="199310.c1643"/>
<dbReference type="CAZy" id="GH23">
    <property type="family name" value="Glycoside Hydrolase Family 23"/>
</dbReference>
<dbReference type="KEGG" id="ecc:c1643"/>
<dbReference type="eggNOG" id="COG0741">
    <property type="taxonomic scope" value="Bacteria"/>
</dbReference>
<dbReference type="HOGENOM" id="CLU_103257_0_0_6"/>
<dbReference type="Proteomes" id="UP000001410">
    <property type="component" value="Chromosome"/>
</dbReference>
<dbReference type="GO" id="GO:0009279">
    <property type="term" value="C:cell outer membrane"/>
    <property type="evidence" value="ECO:0007669"/>
    <property type="project" value="UniProtKB-SubCell"/>
</dbReference>
<dbReference type="GO" id="GO:0008932">
    <property type="term" value="F:lytic endotransglycosylase activity"/>
    <property type="evidence" value="ECO:0007669"/>
    <property type="project" value="InterPro"/>
</dbReference>
<dbReference type="GO" id="GO:0016998">
    <property type="term" value="P:cell wall macromolecule catabolic process"/>
    <property type="evidence" value="ECO:0007669"/>
    <property type="project" value="UniProtKB-UniRule"/>
</dbReference>
<dbReference type="GO" id="GO:0071555">
    <property type="term" value="P:cell wall organization"/>
    <property type="evidence" value="ECO:0007669"/>
    <property type="project" value="UniProtKB-KW"/>
</dbReference>
<dbReference type="GO" id="GO:0000270">
    <property type="term" value="P:peptidoglycan metabolic process"/>
    <property type="evidence" value="ECO:0007669"/>
    <property type="project" value="InterPro"/>
</dbReference>
<dbReference type="CDD" id="cd16893">
    <property type="entry name" value="LT_MltC_MltE"/>
    <property type="match status" value="1"/>
</dbReference>
<dbReference type="FunFam" id="1.10.530.10:FF:000007">
    <property type="entry name" value="Endo-type membrane-bound lytic murein transglycosylase A"/>
    <property type="match status" value="1"/>
</dbReference>
<dbReference type="Gene3D" id="1.10.530.10">
    <property type="match status" value="1"/>
</dbReference>
<dbReference type="HAMAP" id="MF_01381">
    <property type="entry name" value="EmtA"/>
    <property type="match status" value="1"/>
</dbReference>
<dbReference type="InterPro" id="IPR023946">
    <property type="entry name" value="EmtA"/>
</dbReference>
<dbReference type="InterPro" id="IPR023346">
    <property type="entry name" value="Lysozyme-like_dom_sf"/>
</dbReference>
<dbReference type="InterPro" id="IPR000189">
    <property type="entry name" value="Transglyc_AS"/>
</dbReference>
<dbReference type="InterPro" id="IPR008258">
    <property type="entry name" value="Transglycosylase_SLT_dom_1"/>
</dbReference>
<dbReference type="NCBIfam" id="NF012014">
    <property type="entry name" value="PRK15470.1"/>
    <property type="match status" value="1"/>
</dbReference>
<dbReference type="PANTHER" id="PTHR37423:SF4">
    <property type="entry name" value="ENDO-TYPE MEMBRANE-BOUND LYTIC MUREIN TRANSGLYCOSYLASE A"/>
    <property type="match status" value="1"/>
</dbReference>
<dbReference type="PANTHER" id="PTHR37423">
    <property type="entry name" value="SOLUBLE LYTIC MUREIN TRANSGLYCOSYLASE-RELATED"/>
    <property type="match status" value="1"/>
</dbReference>
<dbReference type="Pfam" id="PF01464">
    <property type="entry name" value="SLT"/>
    <property type="match status" value="1"/>
</dbReference>
<dbReference type="SUPFAM" id="SSF53955">
    <property type="entry name" value="Lysozyme-like"/>
    <property type="match status" value="1"/>
</dbReference>
<dbReference type="PROSITE" id="PS51257">
    <property type="entry name" value="PROKAR_LIPOPROTEIN"/>
    <property type="match status" value="1"/>
</dbReference>
<dbReference type="PROSITE" id="PS00922">
    <property type="entry name" value="TRANSGLYCOSYLASE"/>
    <property type="match status" value="1"/>
</dbReference>
<evidence type="ECO:0000255" key="1">
    <source>
        <dbReference type="HAMAP-Rule" id="MF_01381"/>
    </source>
</evidence>
<evidence type="ECO:0000305" key="2"/>
<name>EMTA_ECOL6</name>
<keyword id="KW-0998">Cell outer membrane</keyword>
<keyword id="KW-0961">Cell wall biogenesis/degradation</keyword>
<keyword id="KW-0449">Lipoprotein</keyword>
<keyword id="KW-0456">Lyase</keyword>
<keyword id="KW-0472">Membrane</keyword>
<keyword id="KW-0564">Palmitate</keyword>
<keyword id="KW-1185">Reference proteome</keyword>
<keyword id="KW-0732">Signal</keyword>
<accession>P59243</accession>
<organism>
    <name type="scientific">Escherichia coli O6:H1 (strain CFT073 / ATCC 700928 / UPEC)</name>
    <dbReference type="NCBI Taxonomy" id="199310"/>
    <lineage>
        <taxon>Bacteria</taxon>
        <taxon>Pseudomonadati</taxon>
        <taxon>Pseudomonadota</taxon>
        <taxon>Gammaproteobacteria</taxon>
        <taxon>Enterobacterales</taxon>
        <taxon>Enterobacteriaceae</taxon>
        <taxon>Escherichia</taxon>
    </lineage>
</organism>
<protein>
    <recommendedName>
        <fullName evidence="1">Endo-type membrane-bound lytic murein transglycosylase A</fullName>
        <ecNumber evidence="1">4.2.2.n2</ecNumber>
    </recommendedName>
    <alternativeName>
        <fullName evidence="1">Peptidoglycan lytic endotransglycosylase</fullName>
    </alternativeName>
</protein>
<sequence length="203" mass="22213">MKLRWFAFLIVLLAGCSSKHDYTNPPWNAKVPVQRAMQWMPISQKAGAAWGVDPQLITAIIAIESGGNPNAVSKSNAIGLMQIKASTSGRDVYRRMGWSGEPTTSELKNPERNISMGAAYLNILETGPLAGIEDPKVLQYALVVSYANGAGALLRTFSSDRKKAISKINDLDADEFLDHVARNHPAPQAPRYIYKLEQALDAM</sequence>
<comment type="function">
    <text evidence="1">Murein-degrading enzyme. May play a role in recycling of muropeptides during cell elongation and/or cell division. Preferentially cleaves at a distance of more than two disaccharide units from the ends of the glycan chain.</text>
</comment>
<comment type="catalytic activity">
    <reaction evidence="1">
        <text>Endolytic cleavage of the (1-&gt;4)-beta-glycosidic linkage between N-acetylmuramic acid (MurNAc) and N-acetylglucosamine (GlcNAc) residues in peptidoglycan with concomitant formation of a 1,6-anhydrobond in the MurNAc residue.</text>
        <dbReference type="EC" id="4.2.2.n2"/>
    </reaction>
</comment>
<comment type="subcellular location">
    <subcellularLocation>
        <location evidence="1">Cell outer membrane</location>
        <topology evidence="1">Lipid-anchor</topology>
    </subcellularLocation>
</comment>
<comment type="similarity">
    <text evidence="1">Belongs to the transglycosylase Slt family.</text>
</comment>
<comment type="sequence caution" evidence="2">
    <conflict type="erroneous initiation">
        <sequence resource="EMBL-CDS" id="AAN80108"/>
    </conflict>
</comment>
<feature type="signal peptide" evidence="1">
    <location>
        <begin position="1"/>
        <end position="15"/>
    </location>
</feature>
<feature type="chain" id="PRO_0000196569" description="Endo-type membrane-bound lytic murein transglycosylase A">
    <location>
        <begin position="16"/>
        <end position="203"/>
    </location>
</feature>
<feature type="lipid moiety-binding region" description="N-palmitoyl cysteine" evidence="1">
    <location>
        <position position="16"/>
    </location>
</feature>
<feature type="lipid moiety-binding region" description="S-diacylglycerol cysteine" evidence="1">
    <location>
        <position position="16"/>
    </location>
</feature>
<gene>
    <name evidence="1" type="primary">emtA</name>
    <name type="synonym">mltE</name>
    <name type="ordered locus">c1643</name>
</gene>
<proteinExistence type="inferred from homology"/>
<reference key="1">
    <citation type="journal article" date="2002" name="Proc. Natl. Acad. Sci. U.S.A.">
        <title>Extensive mosaic structure revealed by the complete genome sequence of uropathogenic Escherichia coli.</title>
        <authorList>
            <person name="Welch R.A."/>
            <person name="Burland V."/>
            <person name="Plunkett G. III"/>
            <person name="Redford P."/>
            <person name="Roesch P."/>
            <person name="Rasko D."/>
            <person name="Buckles E.L."/>
            <person name="Liou S.-R."/>
            <person name="Boutin A."/>
            <person name="Hackett J."/>
            <person name="Stroud D."/>
            <person name="Mayhew G.F."/>
            <person name="Rose D.J."/>
            <person name="Zhou S."/>
            <person name="Schwartz D.C."/>
            <person name="Perna N.T."/>
            <person name="Mobley H.L.T."/>
            <person name="Donnenberg M.S."/>
            <person name="Blattner F.R."/>
        </authorList>
    </citation>
    <scope>NUCLEOTIDE SEQUENCE [LARGE SCALE GENOMIC DNA]</scope>
    <source>
        <strain>CFT073 / ATCC 700928 / UPEC</strain>
    </source>
</reference>
<reference key="2">
    <citation type="journal article" date="1998" name="Infect. Immun.">
        <title>Genomic analysis of a pathogenicity island in uropathogenic Escherichia coli CFT073: distribution of homologous sequences among isolates from patients with pyelonephritis, cystitis, and catheter-associated bacteriuria and from fecal samples.</title>
        <authorList>
            <person name="Guyer D.M."/>
            <person name="Kao J.-S."/>
            <person name="Mobley H.L.T."/>
        </authorList>
    </citation>
    <scope>NUCLEOTIDE SEQUENCE [GENOMIC DNA] OF 37-203</scope>
    <source>
        <strain>CFT073 / ATCC 700928 / UPEC</strain>
    </source>
</reference>